<dbReference type="EC" id="2.7.4.6"/>
<dbReference type="SMR" id="P85287"/>
<dbReference type="iPTMnet" id="P85287"/>
<dbReference type="BRENDA" id="2.7.4.6">
    <property type="organism ID" value="10454"/>
</dbReference>
<dbReference type="GO" id="GO:0005737">
    <property type="term" value="C:cytoplasm"/>
    <property type="evidence" value="ECO:0007669"/>
    <property type="project" value="UniProtKB-SubCell"/>
</dbReference>
<dbReference type="GO" id="GO:0030027">
    <property type="term" value="C:lamellipodium"/>
    <property type="evidence" value="ECO:0007669"/>
    <property type="project" value="UniProtKB-SubCell"/>
</dbReference>
<dbReference type="GO" id="GO:0005634">
    <property type="term" value="C:nucleus"/>
    <property type="evidence" value="ECO:0007669"/>
    <property type="project" value="UniProtKB-SubCell"/>
</dbReference>
<dbReference type="GO" id="GO:0001726">
    <property type="term" value="C:ruffle"/>
    <property type="evidence" value="ECO:0007669"/>
    <property type="project" value="UniProtKB-SubCell"/>
</dbReference>
<dbReference type="GO" id="GO:0005524">
    <property type="term" value="F:ATP binding"/>
    <property type="evidence" value="ECO:0007669"/>
    <property type="project" value="UniProtKB-KW"/>
</dbReference>
<dbReference type="GO" id="GO:0046872">
    <property type="term" value="F:metal ion binding"/>
    <property type="evidence" value="ECO:0007669"/>
    <property type="project" value="UniProtKB-KW"/>
</dbReference>
<dbReference type="GO" id="GO:0004550">
    <property type="term" value="F:nucleoside diphosphate kinase activity"/>
    <property type="evidence" value="ECO:0007669"/>
    <property type="project" value="UniProtKB-EC"/>
</dbReference>
<dbReference type="GO" id="GO:0009117">
    <property type="term" value="P:nucleotide metabolic process"/>
    <property type="evidence" value="ECO:0007669"/>
    <property type="project" value="UniProtKB-KW"/>
</dbReference>
<dbReference type="CDD" id="cd04413">
    <property type="entry name" value="NDPk_I"/>
    <property type="match status" value="1"/>
</dbReference>
<dbReference type="FunFam" id="3.30.70.141:FF:000039">
    <property type="entry name" value="Nucleoside diphosphate kinase B"/>
    <property type="match status" value="1"/>
</dbReference>
<dbReference type="Gene3D" id="3.30.70.141">
    <property type="entry name" value="Nucleoside diphosphate kinase-like domain"/>
    <property type="match status" value="1"/>
</dbReference>
<dbReference type="InterPro" id="IPR034907">
    <property type="entry name" value="NDK-like_dom"/>
</dbReference>
<dbReference type="InterPro" id="IPR036850">
    <property type="entry name" value="NDK-like_dom_sf"/>
</dbReference>
<dbReference type="PANTHER" id="PTHR11349">
    <property type="entry name" value="NUCLEOSIDE DIPHOSPHATE KINASE"/>
    <property type="match status" value="1"/>
</dbReference>
<dbReference type="Pfam" id="PF00334">
    <property type="entry name" value="NDK"/>
    <property type="match status" value="1"/>
</dbReference>
<dbReference type="SMART" id="SM00562">
    <property type="entry name" value="NDK"/>
    <property type="match status" value="1"/>
</dbReference>
<dbReference type="SUPFAM" id="SSF54919">
    <property type="entry name" value="Nucleoside diphosphate kinase, NDK"/>
    <property type="match status" value="1"/>
</dbReference>
<dbReference type="PROSITE" id="PS51374">
    <property type="entry name" value="NDPK_LIKE"/>
    <property type="match status" value="1"/>
</dbReference>
<keyword id="KW-0007">Acetylation</keyword>
<keyword id="KW-0067">ATP-binding</keyword>
<keyword id="KW-0131">Cell cycle</keyword>
<keyword id="KW-0966">Cell projection</keyword>
<keyword id="KW-0963">Cytoplasm</keyword>
<keyword id="KW-0903">Direct protein sequencing</keyword>
<keyword id="KW-0418">Kinase</keyword>
<keyword id="KW-0460">Magnesium</keyword>
<keyword id="KW-0479">Metal-binding</keyword>
<keyword id="KW-0546">Nucleotide metabolism</keyword>
<keyword id="KW-0547">Nucleotide-binding</keyword>
<keyword id="KW-0539">Nucleus</keyword>
<keyword id="KW-0597">Phosphoprotein</keyword>
<keyword id="KW-0808">Transferase</keyword>
<protein>
    <recommendedName>
        <fullName>Nucleoside diphosphate kinase B</fullName>
        <shortName>NDK B</shortName>
        <shortName>NDP kinase B</shortName>
        <ecNumber>2.7.4.6</ecNumber>
    </recommendedName>
</protein>
<accession>P85287</accession>
<proteinExistence type="evidence at protein level"/>
<evidence type="ECO:0000250" key="1">
    <source>
        <dbReference type="UniProtKB" id="P15531"/>
    </source>
</evidence>
<evidence type="ECO:0000250" key="2">
    <source>
        <dbReference type="UniProtKB" id="P22392"/>
    </source>
</evidence>
<evidence type="ECO:0000255" key="3"/>
<evidence type="ECO:0000255" key="4">
    <source>
        <dbReference type="PROSITE-ProRule" id="PRU10030"/>
    </source>
</evidence>
<evidence type="ECO:0000269" key="5">
    <source>
    </source>
</evidence>
<evidence type="ECO:0000303" key="6">
    <source>
    </source>
</evidence>
<evidence type="ECO:0000305" key="7"/>
<sequence>MEQTFVAIKPDGVQRGLCGEVMKFIQPMKHYLDLKDMPFYAGLCKYMSSGPVFAMVWEGEGIVKMMLGETNPADSKPGSIRGDFCINIGRNIIHGSDTVENAKMEVGLWFKPEEFVAYAEKAKAWVYE</sequence>
<name>NDKB_MERPL</name>
<gene>
    <name type="primary">nme2</name>
</gene>
<feature type="chain" id="PRO_0000306185" description="Nucleoside diphosphate kinase B">
    <location>
        <begin position="1"/>
        <end position="128"/>
    </location>
</feature>
<feature type="active site" description="Pros-phosphohistidine intermediate" evidence="1 4">
    <location>
        <position position="94"/>
    </location>
</feature>
<feature type="binding site" evidence="1">
    <location>
        <position position="9"/>
    </location>
    <ligand>
        <name>ATP</name>
        <dbReference type="ChEBI" id="CHEBI:30616"/>
    </ligand>
</feature>
<feature type="binding site" evidence="1">
    <location>
        <position position="39"/>
    </location>
    <ligand>
        <name>ATP</name>
        <dbReference type="ChEBI" id="CHEBI:30616"/>
    </ligand>
</feature>
<feature type="binding site" evidence="1">
    <location>
        <position position="70"/>
    </location>
    <ligand>
        <name>ATP</name>
        <dbReference type="ChEBI" id="CHEBI:30616"/>
    </ligand>
</feature>
<feature type="binding site" evidence="1">
    <location>
        <position position="81"/>
    </location>
    <ligand>
        <name>ATP</name>
        <dbReference type="ChEBI" id="CHEBI:30616"/>
    </ligand>
</feature>
<feature type="binding site" evidence="1">
    <location>
        <position position="91"/>
    </location>
    <ligand>
        <name>ATP</name>
        <dbReference type="ChEBI" id="CHEBI:30616"/>
    </ligand>
</feature>
<feature type="modified residue" description="N-acetylmethionine" evidence="5">
    <location>
        <position position="1"/>
    </location>
</feature>
<feature type="non-consecutive residues" evidence="6">
    <location>
        <begin position="23"/>
        <end position="24"/>
    </location>
</feature>
<feature type="non-consecutive residues" evidence="6">
    <location>
        <begin position="27"/>
        <end position="28"/>
    </location>
</feature>
<feature type="non-consecutive residues" evidence="6">
    <location>
        <begin position="29"/>
        <end position="30"/>
    </location>
</feature>
<feature type="non-consecutive residues" evidence="6">
    <location>
        <begin position="64"/>
        <end position="65"/>
    </location>
</feature>
<organism>
    <name type="scientific">Merluccius polylepis</name>
    <name type="common">Southern hake</name>
    <name type="synonym">Merluccius australis polylepis</name>
    <dbReference type="NCBI Taxonomy" id="2705414"/>
    <lineage>
        <taxon>Eukaryota</taxon>
        <taxon>Metazoa</taxon>
        <taxon>Chordata</taxon>
        <taxon>Craniata</taxon>
        <taxon>Vertebrata</taxon>
        <taxon>Euteleostomi</taxon>
        <taxon>Actinopterygii</taxon>
        <taxon>Neopterygii</taxon>
        <taxon>Teleostei</taxon>
        <taxon>Neoteleostei</taxon>
        <taxon>Acanthomorphata</taxon>
        <taxon>Zeiogadaria</taxon>
        <taxon>Gadariae</taxon>
        <taxon>Gadiformes</taxon>
        <taxon>Gadoidei</taxon>
        <taxon>Merlucciidae</taxon>
        <taxon>Merluccius</taxon>
    </lineage>
</organism>
<reference evidence="7" key="1">
    <citation type="journal article" date="2007" name="J. Proteome Res.">
        <title>De novo mass spectrometry sequencing and characterization of species-specific peptides from nucleoside diphosphate kinase B for the classification of commercial fish species belonging to the family Merlucciidae.</title>
        <authorList>
            <person name="Carrera M."/>
            <person name="Canas B."/>
            <person name="Pineiro C."/>
            <person name="Vazquez J."/>
            <person name="Gallardo J.M."/>
        </authorList>
    </citation>
    <scope>PROTEIN SEQUENCE</scope>
    <scope>ACETYLATION AT MET-1</scope>
    <source>
        <tissue evidence="5">White muscle</tissue>
    </source>
</reference>
<comment type="function">
    <text evidence="1">Major role in the synthesis of nucleoside triphosphates other than ATP.</text>
</comment>
<comment type="catalytic activity">
    <reaction evidence="1 4">
        <text>a 2'-deoxyribonucleoside 5'-diphosphate + ATP = a 2'-deoxyribonucleoside 5'-triphosphate + ADP</text>
        <dbReference type="Rhea" id="RHEA:44640"/>
        <dbReference type="ChEBI" id="CHEBI:30616"/>
        <dbReference type="ChEBI" id="CHEBI:61560"/>
        <dbReference type="ChEBI" id="CHEBI:73316"/>
        <dbReference type="ChEBI" id="CHEBI:456216"/>
        <dbReference type="EC" id="2.7.4.6"/>
    </reaction>
</comment>
<comment type="catalytic activity">
    <reaction evidence="1 4">
        <text>a ribonucleoside 5'-diphosphate + ATP = a ribonucleoside 5'-triphosphate + ADP</text>
        <dbReference type="Rhea" id="RHEA:18113"/>
        <dbReference type="ChEBI" id="CHEBI:30616"/>
        <dbReference type="ChEBI" id="CHEBI:57930"/>
        <dbReference type="ChEBI" id="CHEBI:61557"/>
        <dbReference type="ChEBI" id="CHEBI:456216"/>
        <dbReference type="EC" id="2.7.4.6"/>
    </reaction>
</comment>
<comment type="cofactor">
    <cofactor evidence="1">
        <name>Mg(2+)</name>
        <dbReference type="ChEBI" id="CHEBI:18420"/>
    </cofactor>
</comment>
<comment type="subcellular location">
    <subcellularLocation>
        <location evidence="2">Cytoplasm</location>
    </subcellularLocation>
    <subcellularLocation>
        <location evidence="2">Nucleus</location>
    </subcellularLocation>
    <subcellularLocation>
        <location evidence="2">Cell projection</location>
        <location evidence="2">Lamellipodium</location>
    </subcellularLocation>
    <subcellularLocation>
        <location evidence="2">Cell projection</location>
        <location evidence="2">Ruffle</location>
    </subcellularLocation>
</comment>
<comment type="similarity">
    <text evidence="3">Belongs to the NDK family.</text>
</comment>